<evidence type="ECO:0000255" key="1">
    <source>
        <dbReference type="HAMAP-Rule" id="MF_01813"/>
    </source>
</evidence>
<feature type="chain" id="PRO_1000187793" description="Ubiquinone/menaquinone biosynthesis C-methyltransferase UbiE">
    <location>
        <begin position="1"/>
        <end position="258"/>
    </location>
</feature>
<feature type="binding site" evidence="1">
    <location>
        <position position="81"/>
    </location>
    <ligand>
        <name>S-adenosyl-L-methionine</name>
        <dbReference type="ChEBI" id="CHEBI:59789"/>
    </ligand>
</feature>
<feature type="binding site" evidence="1">
    <location>
        <position position="102"/>
    </location>
    <ligand>
        <name>S-adenosyl-L-methionine</name>
        <dbReference type="ChEBI" id="CHEBI:59789"/>
    </ligand>
</feature>
<feature type="binding site" evidence="1">
    <location>
        <begin position="130"/>
        <end position="131"/>
    </location>
    <ligand>
        <name>S-adenosyl-L-methionine</name>
        <dbReference type="ChEBI" id="CHEBI:59789"/>
    </ligand>
</feature>
<proteinExistence type="inferred from homology"/>
<protein>
    <recommendedName>
        <fullName evidence="1">Ubiquinone/menaquinone biosynthesis C-methyltransferase UbiE</fullName>
        <ecNumber evidence="1">2.1.1.163</ecNumber>
        <ecNumber evidence="1">2.1.1.201</ecNumber>
    </recommendedName>
    <alternativeName>
        <fullName evidence="1">2-methoxy-6-polyprenyl-1,4-benzoquinol methylase</fullName>
    </alternativeName>
    <alternativeName>
        <fullName evidence="1">Demethylmenaquinone methyltransferase</fullName>
    </alternativeName>
</protein>
<dbReference type="EC" id="2.1.1.163" evidence="1"/>
<dbReference type="EC" id="2.1.1.201" evidence="1"/>
<dbReference type="EMBL" id="CP001389">
    <property type="protein sequence ID" value="ACP27434.1"/>
    <property type="molecule type" value="Genomic_DNA"/>
</dbReference>
<dbReference type="RefSeq" id="WP_012710176.1">
    <property type="nucleotide sequence ID" value="NC_012587.1"/>
</dbReference>
<dbReference type="RefSeq" id="YP_002828187.1">
    <property type="nucleotide sequence ID" value="NC_012587.1"/>
</dbReference>
<dbReference type="SMR" id="C3MCY6"/>
<dbReference type="STRING" id="394.NGR_c37130"/>
<dbReference type="KEGG" id="rhi:NGR_c37130"/>
<dbReference type="PATRIC" id="fig|394.7.peg.6568"/>
<dbReference type="eggNOG" id="COG2226">
    <property type="taxonomic scope" value="Bacteria"/>
</dbReference>
<dbReference type="HOGENOM" id="CLU_037990_0_0_5"/>
<dbReference type="OrthoDB" id="9808140at2"/>
<dbReference type="UniPathway" id="UPA00079">
    <property type="reaction ID" value="UER00169"/>
</dbReference>
<dbReference type="UniPathway" id="UPA00232"/>
<dbReference type="Proteomes" id="UP000001054">
    <property type="component" value="Chromosome"/>
</dbReference>
<dbReference type="GO" id="GO:0008425">
    <property type="term" value="F:2-methoxy-6-polyprenyl-1,4-benzoquinol methyltransferase activity"/>
    <property type="evidence" value="ECO:0007669"/>
    <property type="project" value="UniProtKB-UniRule"/>
</dbReference>
<dbReference type="GO" id="GO:0043770">
    <property type="term" value="F:demethylmenaquinone methyltransferase activity"/>
    <property type="evidence" value="ECO:0007669"/>
    <property type="project" value="UniProtKB-UniRule"/>
</dbReference>
<dbReference type="GO" id="GO:0009060">
    <property type="term" value="P:aerobic respiration"/>
    <property type="evidence" value="ECO:0007669"/>
    <property type="project" value="UniProtKB-UniRule"/>
</dbReference>
<dbReference type="GO" id="GO:0009234">
    <property type="term" value="P:menaquinone biosynthetic process"/>
    <property type="evidence" value="ECO:0007669"/>
    <property type="project" value="UniProtKB-UniRule"/>
</dbReference>
<dbReference type="GO" id="GO:0032259">
    <property type="term" value="P:methylation"/>
    <property type="evidence" value="ECO:0007669"/>
    <property type="project" value="UniProtKB-KW"/>
</dbReference>
<dbReference type="CDD" id="cd02440">
    <property type="entry name" value="AdoMet_MTases"/>
    <property type="match status" value="1"/>
</dbReference>
<dbReference type="Gene3D" id="3.40.50.150">
    <property type="entry name" value="Vaccinia Virus protein VP39"/>
    <property type="match status" value="1"/>
</dbReference>
<dbReference type="HAMAP" id="MF_01813">
    <property type="entry name" value="MenG_UbiE_methyltr"/>
    <property type="match status" value="1"/>
</dbReference>
<dbReference type="InterPro" id="IPR029063">
    <property type="entry name" value="SAM-dependent_MTases_sf"/>
</dbReference>
<dbReference type="InterPro" id="IPR004033">
    <property type="entry name" value="UbiE/COQ5_MeTrFase"/>
</dbReference>
<dbReference type="InterPro" id="IPR023576">
    <property type="entry name" value="UbiE/COQ5_MeTrFase_CS"/>
</dbReference>
<dbReference type="NCBIfam" id="TIGR01934">
    <property type="entry name" value="MenG_MenH_UbiE"/>
    <property type="match status" value="1"/>
</dbReference>
<dbReference type="NCBIfam" id="NF001242">
    <property type="entry name" value="PRK00216.1-3"/>
    <property type="match status" value="1"/>
</dbReference>
<dbReference type="NCBIfam" id="NF001244">
    <property type="entry name" value="PRK00216.1-5"/>
    <property type="match status" value="1"/>
</dbReference>
<dbReference type="PANTHER" id="PTHR43591:SF24">
    <property type="entry name" value="2-METHOXY-6-POLYPRENYL-1,4-BENZOQUINOL METHYLASE, MITOCHONDRIAL"/>
    <property type="match status" value="1"/>
</dbReference>
<dbReference type="PANTHER" id="PTHR43591">
    <property type="entry name" value="METHYLTRANSFERASE"/>
    <property type="match status" value="1"/>
</dbReference>
<dbReference type="Pfam" id="PF01209">
    <property type="entry name" value="Ubie_methyltran"/>
    <property type="match status" value="1"/>
</dbReference>
<dbReference type="SUPFAM" id="SSF53335">
    <property type="entry name" value="S-adenosyl-L-methionine-dependent methyltransferases"/>
    <property type="match status" value="1"/>
</dbReference>
<dbReference type="PROSITE" id="PS51608">
    <property type="entry name" value="SAM_MT_UBIE"/>
    <property type="match status" value="1"/>
</dbReference>
<dbReference type="PROSITE" id="PS01183">
    <property type="entry name" value="UBIE_1"/>
    <property type="match status" value="1"/>
</dbReference>
<dbReference type="PROSITE" id="PS01184">
    <property type="entry name" value="UBIE_2"/>
    <property type="match status" value="1"/>
</dbReference>
<keyword id="KW-0474">Menaquinone biosynthesis</keyword>
<keyword id="KW-0489">Methyltransferase</keyword>
<keyword id="KW-1185">Reference proteome</keyword>
<keyword id="KW-0949">S-adenosyl-L-methionine</keyword>
<keyword id="KW-0808">Transferase</keyword>
<keyword id="KW-0831">Ubiquinone biosynthesis</keyword>
<reference key="1">
    <citation type="journal article" date="2009" name="Appl. Environ. Microbiol.">
        <title>Rhizobium sp. strain NGR234 possesses a remarkable number of secretion systems.</title>
        <authorList>
            <person name="Schmeisser C."/>
            <person name="Liesegang H."/>
            <person name="Krysciak D."/>
            <person name="Bakkou N."/>
            <person name="Le Quere A."/>
            <person name="Wollherr A."/>
            <person name="Heinemeyer I."/>
            <person name="Morgenstern B."/>
            <person name="Pommerening-Roeser A."/>
            <person name="Flores M."/>
            <person name="Palacios R."/>
            <person name="Brenner S."/>
            <person name="Gottschalk G."/>
            <person name="Schmitz R.A."/>
            <person name="Broughton W.J."/>
            <person name="Perret X."/>
            <person name="Strittmatter A.W."/>
            <person name="Streit W.R."/>
        </authorList>
    </citation>
    <scope>NUCLEOTIDE SEQUENCE [LARGE SCALE GENOMIC DNA]</scope>
    <source>
        <strain>NBRC 101917 / NGR234</strain>
    </source>
</reference>
<organism>
    <name type="scientific">Sinorhizobium fredii (strain NBRC 101917 / NGR234)</name>
    <dbReference type="NCBI Taxonomy" id="394"/>
    <lineage>
        <taxon>Bacteria</taxon>
        <taxon>Pseudomonadati</taxon>
        <taxon>Pseudomonadota</taxon>
        <taxon>Alphaproteobacteria</taxon>
        <taxon>Hyphomicrobiales</taxon>
        <taxon>Rhizobiaceae</taxon>
        <taxon>Sinorhizobium/Ensifer group</taxon>
        <taxon>Sinorhizobium</taxon>
    </lineage>
</organism>
<accession>C3MCY6</accession>
<name>UBIE_SINFN</name>
<comment type="function">
    <text evidence="1">Methyltransferase required for the conversion of demethylmenaquinol (DMKH2) to menaquinol (MKH2) and the conversion of 2-polyprenyl-6-methoxy-1,4-benzoquinol (DDMQH2) to 2-polyprenyl-3-methyl-6-methoxy-1,4-benzoquinol (DMQH2).</text>
</comment>
<comment type="catalytic activity">
    <reaction evidence="1">
        <text>a 2-demethylmenaquinol + S-adenosyl-L-methionine = a menaquinol + S-adenosyl-L-homocysteine + H(+)</text>
        <dbReference type="Rhea" id="RHEA:42640"/>
        <dbReference type="Rhea" id="RHEA-COMP:9539"/>
        <dbReference type="Rhea" id="RHEA-COMP:9563"/>
        <dbReference type="ChEBI" id="CHEBI:15378"/>
        <dbReference type="ChEBI" id="CHEBI:18151"/>
        <dbReference type="ChEBI" id="CHEBI:55437"/>
        <dbReference type="ChEBI" id="CHEBI:57856"/>
        <dbReference type="ChEBI" id="CHEBI:59789"/>
        <dbReference type="EC" id="2.1.1.163"/>
    </reaction>
</comment>
<comment type="catalytic activity">
    <reaction evidence="1">
        <text>a 2-methoxy-6-(all-trans-polyprenyl)benzene-1,4-diol + S-adenosyl-L-methionine = a 5-methoxy-2-methyl-3-(all-trans-polyprenyl)benzene-1,4-diol + S-adenosyl-L-homocysteine + H(+)</text>
        <dbReference type="Rhea" id="RHEA:28286"/>
        <dbReference type="Rhea" id="RHEA-COMP:10858"/>
        <dbReference type="Rhea" id="RHEA-COMP:10859"/>
        <dbReference type="ChEBI" id="CHEBI:15378"/>
        <dbReference type="ChEBI" id="CHEBI:57856"/>
        <dbReference type="ChEBI" id="CHEBI:59789"/>
        <dbReference type="ChEBI" id="CHEBI:84166"/>
        <dbReference type="ChEBI" id="CHEBI:84167"/>
        <dbReference type="EC" id="2.1.1.201"/>
    </reaction>
</comment>
<comment type="pathway">
    <text evidence="1">Quinol/quinone metabolism; menaquinone biosynthesis; menaquinol from 1,4-dihydroxy-2-naphthoate: step 2/2.</text>
</comment>
<comment type="pathway">
    <text evidence="1">Cofactor biosynthesis; ubiquinone biosynthesis.</text>
</comment>
<comment type="similarity">
    <text evidence="1">Belongs to the class I-like SAM-binding methyltransferase superfamily. MenG/UbiE family.</text>
</comment>
<gene>
    <name evidence="1" type="primary">ubiE</name>
    <name type="ordered locus">NGR_c37130</name>
</gene>
<sequence length="258" mass="28603">MTDERVSADGGMETSFGFRDVGTGEKQPLVNDVFHKVAKRYDVMNDVMSAGLHRVWKDAMIAALNPPRRENYRVLDVAGGTGDIAFRIVEASGRKAHATVLDINGSMLAVGAERARKKGLLGNLEFVEANAEDLPFAANSFDAYTIAFGIRNVPRIEVALKEAYRVLKRGGRLLVLEFSEVEMPLLDRFYDAWSFNAIPKFGKLITGDEAPYQYLVESIRKFPNQRDFAAMIRTAGFGRVSFTNYTGGIAALHSGWKI</sequence>